<protein>
    <recommendedName>
        <fullName evidence="1">Argininosuccinate synthase</fullName>
        <ecNumber evidence="1">6.3.4.5</ecNumber>
    </recommendedName>
    <alternativeName>
        <fullName evidence="1">Citrulline--aspartate ligase</fullName>
    </alternativeName>
</protein>
<feature type="chain" id="PRO_1000073816" description="Argininosuccinate synthase">
    <location>
        <begin position="1"/>
        <end position="417"/>
    </location>
</feature>
<feature type="binding site" evidence="1">
    <location>
        <begin position="8"/>
        <end position="16"/>
    </location>
    <ligand>
        <name>ATP</name>
        <dbReference type="ChEBI" id="CHEBI:30616"/>
    </ligand>
</feature>
<feature type="binding site" evidence="1">
    <location>
        <position position="87"/>
    </location>
    <ligand>
        <name>L-citrulline</name>
        <dbReference type="ChEBI" id="CHEBI:57743"/>
    </ligand>
</feature>
<feature type="binding site" evidence="1">
    <location>
        <position position="117"/>
    </location>
    <ligand>
        <name>ATP</name>
        <dbReference type="ChEBI" id="CHEBI:30616"/>
    </ligand>
</feature>
<feature type="binding site" evidence="1">
    <location>
        <position position="119"/>
    </location>
    <ligand>
        <name>L-aspartate</name>
        <dbReference type="ChEBI" id="CHEBI:29991"/>
    </ligand>
</feature>
<feature type="binding site" evidence="1">
    <location>
        <position position="123"/>
    </location>
    <ligand>
        <name>L-aspartate</name>
        <dbReference type="ChEBI" id="CHEBI:29991"/>
    </ligand>
</feature>
<feature type="binding site" evidence="1">
    <location>
        <position position="123"/>
    </location>
    <ligand>
        <name>L-citrulline</name>
        <dbReference type="ChEBI" id="CHEBI:57743"/>
    </ligand>
</feature>
<feature type="binding site" evidence="1">
    <location>
        <position position="124"/>
    </location>
    <ligand>
        <name>L-aspartate</name>
        <dbReference type="ChEBI" id="CHEBI:29991"/>
    </ligand>
</feature>
<feature type="binding site" evidence="1">
    <location>
        <position position="127"/>
    </location>
    <ligand>
        <name>L-citrulline</name>
        <dbReference type="ChEBI" id="CHEBI:57743"/>
    </ligand>
</feature>
<feature type="binding site" evidence="1">
    <location>
        <position position="175"/>
    </location>
    <ligand>
        <name>L-citrulline</name>
        <dbReference type="ChEBI" id="CHEBI:57743"/>
    </ligand>
</feature>
<feature type="binding site" evidence="1">
    <location>
        <position position="259"/>
    </location>
    <ligand>
        <name>L-citrulline</name>
        <dbReference type="ChEBI" id="CHEBI:57743"/>
    </ligand>
</feature>
<feature type="binding site" evidence="1">
    <location>
        <position position="271"/>
    </location>
    <ligand>
        <name>L-citrulline</name>
        <dbReference type="ChEBI" id="CHEBI:57743"/>
    </ligand>
</feature>
<evidence type="ECO:0000255" key="1">
    <source>
        <dbReference type="HAMAP-Rule" id="MF_00005"/>
    </source>
</evidence>
<sequence length="417" mass="45281">MAERVVLAYSGGLDTSVGIGWLKDATGKEVVALAVDVGQGGEDMEVIRQRALDCGAVEAVVVDAKDEFADDYIVPALKANALYQKRYPLVSGLSRPLIAKHLARVAHELGANSVAHGCTGKGNDQVRFEAAVAALAPDLTSIAPVRDLALTRDKAIVYANEHDLPIEQSKKSPYSIDKNVWGRAVETGFLEDPWNGPIEDLYEYTQDPDVLREATEVTITFEAGVPVAIDGIRYSPLRIVQELNAAAGAHGIGRIDVVEDRLVGIKSREVYEAPAAMTLIEAHEELEALTIERDLGRYKRGVEKDWANLVYDGLWFSGLKRSLDAFIEDSQRHVSGDIRMTLRGGRAVVTGRRSETSLYDFDLATYDTGDTFDQSLSKGFIELWSLPSKISARRDLAVEQAALAADDATPAAAPAAE</sequence>
<gene>
    <name evidence="1" type="primary">argG</name>
    <name type="ordered locus">CMS1236</name>
</gene>
<name>ASSY_CLASE</name>
<reference key="1">
    <citation type="journal article" date="2008" name="J. Bacteriol.">
        <title>Genome of the actinomycete plant pathogen Clavibacter michiganensis subsp. sepedonicus suggests recent niche adaptation.</title>
        <authorList>
            <person name="Bentley S.D."/>
            <person name="Corton C."/>
            <person name="Brown S.E."/>
            <person name="Barron A."/>
            <person name="Clark L."/>
            <person name="Doggett J."/>
            <person name="Harris B."/>
            <person name="Ormond D."/>
            <person name="Quail M.A."/>
            <person name="May G."/>
            <person name="Francis D."/>
            <person name="Knudson D."/>
            <person name="Parkhill J."/>
            <person name="Ishimaru C.A."/>
        </authorList>
    </citation>
    <scope>NUCLEOTIDE SEQUENCE [LARGE SCALE GENOMIC DNA]</scope>
    <source>
        <strain>ATCC 33113 / DSM 20744 / JCM 9667 / LMG 2889 / ICMP 2535 / C-1</strain>
    </source>
</reference>
<keyword id="KW-0028">Amino-acid biosynthesis</keyword>
<keyword id="KW-0055">Arginine biosynthesis</keyword>
<keyword id="KW-0067">ATP-binding</keyword>
<keyword id="KW-0963">Cytoplasm</keyword>
<keyword id="KW-0436">Ligase</keyword>
<keyword id="KW-0547">Nucleotide-binding</keyword>
<dbReference type="EC" id="6.3.4.5" evidence="1"/>
<dbReference type="EMBL" id="AM849034">
    <property type="protein sequence ID" value="CAQ01352.1"/>
    <property type="molecule type" value="Genomic_DNA"/>
</dbReference>
<dbReference type="RefSeq" id="WP_012298630.1">
    <property type="nucleotide sequence ID" value="NZ_MZMN01000003.1"/>
</dbReference>
<dbReference type="SMR" id="B0RHD5"/>
<dbReference type="STRING" id="31964.CMS1236"/>
<dbReference type="KEGG" id="cms:CMS1236"/>
<dbReference type="eggNOG" id="COG0137">
    <property type="taxonomic scope" value="Bacteria"/>
</dbReference>
<dbReference type="HOGENOM" id="CLU_032784_4_2_11"/>
<dbReference type="OrthoDB" id="9801641at2"/>
<dbReference type="UniPathway" id="UPA00068">
    <property type="reaction ID" value="UER00113"/>
</dbReference>
<dbReference type="Proteomes" id="UP000001318">
    <property type="component" value="Chromosome"/>
</dbReference>
<dbReference type="GO" id="GO:0005737">
    <property type="term" value="C:cytoplasm"/>
    <property type="evidence" value="ECO:0007669"/>
    <property type="project" value="UniProtKB-SubCell"/>
</dbReference>
<dbReference type="GO" id="GO:0004055">
    <property type="term" value="F:argininosuccinate synthase activity"/>
    <property type="evidence" value="ECO:0007669"/>
    <property type="project" value="UniProtKB-UniRule"/>
</dbReference>
<dbReference type="GO" id="GO:0005524">
    <property type="term" value="F:ATP binding"/>
    <property type="evidence" value="ECO:0007669"/>
    <property type="project" value="UniProtKB-UniRule"/>
</dbReference>
<dbReference type="GO" id="GO:0000053">
    <property type="term" value="P:argininosuccinate metabolic process"/>
    <property type="evidence" value="ECO:0007669"/>
    <property type="project" value="TreeGrafter"/>
</dbReference>
<dbReference type="GO" id="GO:0006526">
    <property type="term" value="P:L-arginine biosynthetic process"/>
    <property type="evidence" value="ECO:0007669"/>
    <property type="project" value="UniProtKB-UniRule"/>
</dbReference>
<dbReference type="GO" id="GO:0000050">
    <property type="term" value="P:urea cycle"/>
    <property type="evidence" value="ECO:0007669"/>
    <property type="project" value="TreeGrafter"/>
</dbReference>
<dbReference type="CDD" id="cd01999">
    <property type="entry name" value="ASS"/>
    <property type="match status" value="1"/>
</dbReference>
<dbReference type="FunFam" id="3.40.50.620:FF:000038">
    <property type="entry name" value="Argininosuccinate synthase"/>
    <property type="match status" value="1"/>
</dbReference>
<dbReference type="FunFam" id="3.90.1260.10:FF:000007">
    <property type="entry name" value="Argininosuccinate synthase"/>
    <property type="match status" value="1"/>
</dbReference>
<dbReference type="Gene3D" id="3.90.1260.10">
    <property type="entry name" value="Argininosuccinate synthetase, chain A, domain 2"/>
    <property type="match status" value="1"/>
</dbReference>
<dbReference type="Gene3D" id="3.40.50.620">
    <property type="entry name" value="HUPs"/>
    <property type="match status" value="1"/>
</dbReference>
<dbReference type="Gene3D" id="1.20.5.470">
    <property type="entry name" value="Single helix bin"/>
    <property type="match status" value="1"/>
</dbReference>
<dbReference type="HAMAP" id="MF_00005">
    <property type="entry name" value="Arg_succ_synth_type1"/>
    <property type="match status" value="1"/>
</dbReference>
<dbReference type="InterPro" id="IPR048268">
    <property type="entry name" value="Arginosuc_syn_C"/>
</dbReference>
<dbReference type="InterPro" id="IPR048267">
    <property type="entry name" value="Arginosuc_syn_N"/>
</dbReference>
<dbReference type="InterPro" id="IPR001518">
    <property type="entry name" value="Arginosuc_synth"/>
</dbReference>
<dbReference type="InterPro" id="IPR018223">
    <property type="entry name" value="Arginosuc_synth_CS"/>
</dbReference>
<dbReference type="InterPro" id="IPR023434">
    <property type="entry name" value="Arginosuc_synth_type_1_subfam"/>
</dbReference>
<dbReference type="InterPro" id="IPR024074">
    <property type="entry name" value="AS_cat/multimer_dom_body"/>
</dbReference>
<dbReference type="InterPro" id="IPR014729">
    <property type="entry name" value="Rossmann-like_a/b/a_fold"/>
</dbReference>
<dbReference type="NCBIfam" id="TIGR00032">
    <property type="entry name" value="argG"/>
    <property type="match status" value="1"/>
</dbReference>
<dbReference type="NCBIfam" id="NF001770">
    <property type="entry name" value="PRK00509.1"/>
    <property type="match status" value="1"/>
</dbReference>
<dbReference type="PANTHER" id="PTHR11587">
    <property type="entry name" value="ARGININOSUCCINATE SYNTHASE"/>
    <property type="match status" value="1"/>
</dbReference>
<dbReference type="PANTHER" id="PTHR11587:SF2">
    <property type="entry name" value="ARGININOSUCCINATE SYNTHASE"/>
    <property type="match status" value="1"/>
</dbReference>
<dbReference type="Pfam" id="PF20979">
    <property type="entry name" value="Arginosuc_syn_C"/>
    <property type="match status" value="1"/>
</dbReference>
<dbReference type="Pfam" id="PF00764">
    <property type="entry name" value="Arginosuc_synth"/>
    <property type="match status" value="1"/>
</dbReference>
<dbReference type="SUPFAM" id="SSF52402">
    <property type="entry name" value="Adenine nucleotide alpha hydrolases-like"/>
    <property type="match status" value="1"/>
</dbReference>
<dbReference type="SUPFAM" id="SSF69864">
    <property type="entry name" value="Argininosuccinate synthetase, C-terminal domain"/>
    <property type="match status" value="1"/>
</dbReference>
<dbReference type="PROSITE" id="PS00564">
    <property type="entry name" value="ARGININOSUCCIN_SYN_1"/>
    <property type="match status" value="1"/>
</dbReference>
<dbReference type="PROSITE" id="PS00565">
    <property type="entry name" value="ARGININOSUCCIN_SYN_2"/>
    <property type="match status" value="1"/>
</dbReference>
<accession>B0RHD5</accession>
<proteinExistence type="inferred from homology"/>
<comment type="catalytic activity">
    <reaction evidence="1">
        <text>L-citrulline + L-aspartate + ATP = 2-(N(omega)-L-arginino)succinate + AMP + diphosphate + H(+)</text>
        <dbReference type="Rhea" id="RHEA:10932"/>
        <dbReference type="ChEBI" id="CHEBI:15378"/>
        <dbReference type="ChEBI" id="CHEBI:29991"/>
        <dbReference type="ChEBI" id="CHEBI:30616"/>
        <dbReference type="ChEBI" id="CHEBI:33019"/>
        <dbReference type="ChEBI" id="CHEBI:57472"/>
        <dbReference type="ChEBI" id="CHEBI:57743"/>
        <dbReference type="ChEBI" id="CHEBI:456215"/>
        <dbReference type="EC" id="6.3.4.5"/>
    </reaction>
</comment>
<comment type="pathway">
    <text evidence="1">Amino-acid biosynthesis; L-arginine biosynthesis; L-arginine from L-ornithine and carbamoyl phosphate: step 2/3.</text>
</comment>
<comment type="subunit">
    <text evidence="1">Homotetramer.</text>
</comment>
<comment type="subcellular location">
    <subcellularLocation>
        <location evidence="1">Cytoplasm</location>
    </subcellularLocation>
</comment>
<comment type="similarity">
    <text evidence="1">Belongs to the argininosuccinate synthase family. Type 1 subfamily.</text>
</comment>
<organism>
    <name type="scientific">Clavibacter sepedonicus</name>
    <name type="common">Clavibacter michiganensis subsp. sepedonicus</name>
    <dbReference type="NCBI Taxonomy" id="31964"/>
    <lineage>
        <taxon>Bacteria</taxon>
        <taxon>Bacillati</taxon>
        <taxon>Actinomycetota</taxon>
        <taxon>Actinomycetes</taxon>
        <taxon>Micrococcales</taxon>
        <taxon>Microbacteriaceae</taxon>
        <taxon>Clavibacter</taxon>
    </lineage>
</organism>